<keyword id="KW-1003">Cell membrane</keyword>
<keyword id="KW-1015">Disulfide bond</keyword>
<keyword id="KW-0297">G-protein coupled receptor</keyword>
<keyword id="KW-0472">Membrane</keyword>
<keyword id="KW-0675">Receptor</keyword>
<keyword id="KW-1185">Reference proteome</keyword>
<keyword id="KW-0807">Transducer</keyword>
<keyword id="KW-0812">Transmembrane</keyword>
<keyword id="KW-1133">Transmembrane helix</keyword>
<organism>
    <name type="scientific">Rattus norvegicus</name>
    <name type="common">Rat</name>
    <dbReference type="NCBI Taxonomy" id="10116"/>
    <lineage>
        <taxon>Eukaryota</taxon>
        <taxon>Metazoa</taxon>
        <taxon>Chordata</taxon>
        <taxon>Craniata</taxon>
        <taxon>Vertebrata</taxon>
        <taxon>Euteleostomi</taxon>
        <taxon>Mammalia</taxon>
        <taxon>Eutheria</taxon>
        <taxon>Euarchontoglires</taxon>
        <taxon>Glires</taxon>
        <taxon>Rodentia</taxon>
        <taxon>Myomorpha</taxon>
        <taxon>Muroidea</taxon>
        <taxon>Muridae</taxon>
        <taxon>Murinae</taxon>
        <taxon>Rattus</taxon>
    </lineage>
</organism>
<proteinExistence type="evidence at transcript level"/>
<accession>Q9QXI3</accession>
<comment type="function">
    <text evidence="1">Orphan receptor. Displays a significant level of constitutive activity. Its effect is mediated by G(s)-alpha protein that stimulate adenylate cyclase, resulting in an elevation of intracellular cAMP (By similarity).</text>
</comment>
<comment type="subcellular location">
    <subcellularLocation>
        <location>Cell membrane</location>
        <topology>Multi-pass membrane protein</topology>
    </subcellularLocation>
</comment>
<comment type="tissue specificity">
    <text>Detected in extracts of several brain regions including striatum, pons, cerebellum and cortex. Not detected in numerous peripheral tissue extracts, except in testis. In the brain, detected in cortical structures including the anterior cingulate area, posterior cingulate and the frontoparietal, somatosensory and piriform cortices. Prominent also in the olfactory tubercle, the islands of Calleja, ventromedial and posterior nuclei of the hypothalamus, the medial septal nucleus, nucleus of the diagonal band and the ventral tegmental area. Localized also to hippocampal structures, with signals strongest over the CA2 and CA3 regions of Ammon's horn and less so over the dentate gyrus. Expressed in the caudate putamen only in its most caudal portion, with a decreasing gradient of signal from the dorsal to ventral aspect. Strong expression associated with a single pontine structure, the inferior olivary nucleus.</text>
</comment>
<comment type="similarity">
    <text evidence="3">Belongs to the G-protein coupled receptor 1 family.</text>
</comment>
<name>GPR26_RAT</name>
<evidence type="ECO:0000250" key="1"/>
<evidence type="ECO:0000255" key="2"/>
<evidence type="ECO:0000255" key="3">
    <source>
        <dbReference type="PROSITE-ProRule" id="PRU00521"/>
    </source>
</evidence>
<dbReference type="EMBL" id="AF208288">
    <property type="protein sequence ID" value="AAF21012.1"/>
    <property type="molecule type" value="mRNA"/>
</dbReference>
<dbReference type="RefSeq" id="NP_620196.1">
    <property type="nucleotide sequence ID" value="NM_138841.1"/>
</dbReference>
<dbReference type="SMR" id="Q9QXI3"/>
<dbReference type="FunCoup" id="Q9QXI3">
    <property type="interactions" value="68"/>
</dbReference>
<dbReference type="STRING" id="10116.ENSRNOP00000067319"/>
<dbReference type="PhosphoSitePlus" id="Q9QXI3"/>
<dbReference type="PaxDb" id="10116-ENSRNOP00000067319"/>
<dbReference type="Ensembl" id="ENSRNOT00000075540.2">
    <property type="protein sequence ID" value="ENSRNOP00000067319.1"/>
    <property type="gene ID" value="ENSRNOG00000047057.2"/>
</dbReference>
<dbReference type="GeneID" id="192153"/>
<dbReference type="KEGG" id="rno:192153"/>
<dbReference type="AGR" id="RGD:619843"/>
<dbReference type="CTD" id="2849"/>
<dbReference type="RGD" id="619843">
    <property type="gene designation" value="Gpr26"/>
</dbReference>
<dbReference type="eggNOG" id="KOG3656">
    <property type="taxonomic scope" value="Eukaryota"/>
</dbReference>
<dbReference type="GeneTree" id="ENSGT00950000183001"/>
<dbReference type="HOGENOM" id="CLU_009579_3_5_1"/>
<dbReference type="InParanoid" id="Q9QXI3"/>
<dbReference type="OMA" id="WLGFHHL"/>
<dbReference type="OrthoDB" id="6159456at2759"/>
<dbReference type="PhylomeDB" id="Q9QXI3"/>
<dbReference type="PRO" id="PR:Q9QXI3"/>
<dbReference type="Proteomes" id="UP000002494">
    <property type="component" value="Chromosome 1"/>
</dbReference>
<dbReference type="Bgee" id="ENSRNOG00000047057">
    <property type="expression patterns" value="Expressed in frontal cortex and 2 other cell types or tissues"/>
</dbReference>
<dbReference type="GO" id="GO:0005886">
    <property type="term" value="C:plasma membrane"/>
    <property type="evidence" value="ECO:0007669"/>
    <property type="project" value="UniProtKB-SubCell"/>
</dbReference>
<dbReference type="GO" id="GO:0004930">
    <property type="term" value="F:G protein-coupled receptor activity"/>
    <property type="evidence" value="ECO:0000250"/>
    <property type="project" value="UniProtKB"/>
</dbReference>
<dbReference type="GO" id="GO:0007189">
    <property type="term" value="P:adenylate cyclase-activating G protein-coupled receptor signaling pathway"/>
    <property type="evidence" value="ECO:0000250"/>
    <property type="project" value="UniProtKB"/>
</dbReference>
<dbReference type="CDD" id="cd15219">
    <property type="entry name" value="7tmA_GPR26_GPR78-like"/>
    <property type="match status" value="1"/>
</dbReference>
<dbReference type="FunFam" id="1.20.1070.10:FF:000095">
    <property type="entry name" value="G-protein coupled receptor 26"/>
    <property type="match status" value="1"/>
</dbReference>
<dbReference type="Gene3D" id="1.20.1070.10">
    <property type="entry name" value="Rhodopsin 7-helix transmembrane proteins"/>
    <property type="match status" value="1"/>
</dbReference>
<dbReference type="InterPro" id="IPR051880">
    <property type="entry name" value="GPC_Orphan_Receptors"/>
</dbReference>
<dbReference type="InterPro" id="IPR000276">
    <property type="entry name" value="GPCR_Rhodpsn"/>
</dbReference>
<dbReference type="InterPro" id="IPR017452">
    <property type="entry name" value="GPCR_Rhodpsn_7TM"/>
</dbReference>
<dbReference type="InterPro" id="IPR049579">
    <property type="entry name" value="GPR26/78-like"/>
</dbReference>
<dbReference type="PANTHER" id="PTHR24245">
    <property type="entry name" value="G-PROTEIN COUPLED RECEPTOR"/>
    <property type="match status" value="1"/>
</dbReference>
<dbReference type="PANTHER" id="PTHR24245:SF6">
    <property type="entry name" value="G-PROTEIN COUPLED RECEPTOR 26"/>
    <property type="match status" value="1"/>
</dbReference>
<dbReference type="Pfam" id="PF00001">
    <property type="entry name" value="7tm_1"/>
    <property type="match status" value="1"/>
</dbReference>
<dbReference type="PRINTS" id="PR00237">
    <property type="entry name" value="GPCRRHODOPSN"/>
</dbReference>
<dbReference type="SUPFAM" id="SSF81321">
    <property type="entry name" value="Family A G protein-coupled receptor-like"/>
    <property type="match status" value="1"/>
</dbReference>
<dbReference type="PROSITE" id="PS50262">
    <property type="entry name" value="G_PROTEIN_RECEP_F1_2"/>
    <property type="match status" value="1"/>
</dbReference>
<protein>
    <recommendedName>
        <fullName>G-protein coupled receptor 26</fullName>
    </recommendedName>
</protein>
<gene>
    <name type="primary">Gpr26</name>
</gene>
<sequence length="337" mass="37805">MNSWDAGLAGLLVGTIGVSLLSNGLVLLCLLHSADIRRQAPALFTLNLTCGNLLCTVVNMPLTLAGVVAQRQPAGDRLCRLAAFLDTFLAANSMLSMAALSIDRWVAVVFPLSYRAKMRLRDAAFMVAYTWLHALTFPATALALSWLGFHQLYASCTLCSRRPDERLRFAVFTSAFHALSFLLSFIVLCFTYLKVLKVARFHCKRIDVITMQTLVLLVDIHPSVRERCLEEQKRRRQRATKKISTFIGTFLVCFAPYVITRLVELFSTAPIDSHWGVLSKCLAYSKAASDPFVYSLLRHQYRRSCKELLNRIFNRRSIHSVGLTGDSHSQNILPVSE</sequence>
<reference key="1">
    <citation type="journal article" date="2000" name="Biochim. Biophys. Acta">
        <title>Cloning and characterization of additional members of the G protein-coupled receptor family.</title>
        <authorList>
            <person name="Lee D.K."/>
            <person name="Lynch K.R."/>
            <person name="Nguyen T."/>
            <person name="Im D.-S."/>
            <person name="Cheng R."/>
            <person name="Saldivia V.R."/>
            <person name="Liu Y."/>
            <person name="Liu I.S.C."/>
            <person name="Heng H.H.Q."/>
            <person name="Seeman P."/>
            <person name="George S.R."/>
            <person name="O'Dowd B.F."/>
            <person name="Marchese A."/>
        </authorList>
    </citation>
    <scope>NUCLEOTIDE SEQUENCE [MRNA]</scope>
    <source>
        <tissue>Brain</tissue>
    </source>
</reference>
<feature type="chain" id="PRO_0000069547" description="G-protein coupled receptor 26">
    <location>
        <begin position="1"/>
        <end position="337"/>
    </location>
</feature>
<feature type="topological domain" description="Extracellular" evidence="2">
    <location>
        <begin position="1"/>
        <end position="10"/>
    </location>
</feature>
<feature type="transmembrane region" description="Helical; Name=1" evidence="2">
    <location>
        <begin position="11"/>
        <end position="31"/>
    </location>
</feature>
<feature type="topological domain" description="Cytoplasmic" evidence="2">
    <location>
        <begin position="32"/>
        <end position="47"/>
    </location>
</feature>
<feature type="transmembrane region" description="Helical; Name=2" evidence="2">
    <location>
        <begin position="48"/>
        <end position="68"/>
    </location>
</feature>
<feature type="topological domain" description="Extracellular" evidence="2">
    <location>
        <begin position="69"/>
        <end position="81"/>
    </location>
</feature>
<feature type="transmembrane region" description="Helical; Name=3" evidence="2">
    <location>
        <begin position="82"/>
        <end position="102"/>
    </location>
</feature>
<feature type="topological domain" description="Cytoplasmic" evidence="2">
    <location>
        <begin position="103"/>
        <end position="123"/>
    </location>
</feature>
<feature type="transmembrane region" description="Helical; Name=4" evidence="2">
    <location>
        <begin position="124"/>
        <end position="144"/>
    </location>
</feature>
<feature type="topological domain" description="Extracellular" evidence="2">
    <location>
        <begin position="145"/>
        <end position="168"/>
    </location>
</feature>
<feature type="transmembrane region" description="Helical; Name=5" evidence="2">
    <location>
        <begin position="169"/>
        <end position="189"/>
    </location>
</feature>
<feature type="topological domain" description="Cytoplasmic" evidence="2">
    <location>
        <begin position="190"/>
        <end position="245"/>
    </location>
</feature>
<feature type="transmembrane region" description="Helical; Name=6" evidence="2">
    <location>
        <begin position="246"/>
        <end position="266"/>
    </location>
</feature>
<feature type="topological domain" description="Extracellular" evidence="2">
    <location>
        <begin position="267"/>
        <end position="276"/>
    </location>
</feature>
<feature type="transmembrane region" description="Helical; Name=7" evidence="2">
    <location>
        <begin position="277"/>
        <end position="297"/>
    </location>
</feature>
<feature type="topological domain" description="Cytoplasmic" evidence="2">
    <location>
        <begin position="298"/>
        <end position="337"/>
    </location>
</feature>
<feature type="disulfide bond" evidence="3">
    <location>
        <begin position="79"/>
        <end position="156"/>
    </location>
</feature>